<organism>
    <name type="scientific">Streptomyces clavuligerus</name>
    <dbReference type="NCBI Taxonomy" id="1901"/>
    <lineage>
        <taxon>Bacteria</taxon>
        <taxon>Bacillati</taxon>
        <taxon>Actinomycetota</taxon>
        <taxon>Actinomycetes</taxon>
        <taxon>Kitasatosporales</taxon>
        <taxon>Streptomycetaceae</taxon>
        <taxon>Streptomyces</taxon>
    </lineage>
</organism>
<keyword id="KW-0002">3D-structure</keyword>
<keyword id="KW-0903">Direct protein sequencing</keyword>
<keyword id="KW-1015">Disulfide bond</keyword>
<keyword id="KW-0677">Repeat</keyword>
<keyword id="KW-0964">Secreted</keyword>
<keyword id="KW-0732">Signal</keyword>
<proteinExistence type="evidence at protein level"/>
<protein>
    <recommendedName>
        <fullName>Beta-lactamase inhibitory protein</fullName>
        <shortName>BLIP</shortName>
    </recommendedName>
</protein>
<name>BLIP_STRCL</name>
<sequence>MRTVGIGAGVRRLGRAVVMAAAVGGLVLGSAGASNAAGVMTGAKFTQIQFGMTRQQVLDIAGAENCETGGSFGDSIHCRGHAAGDYYAYATFGFTSAAADAKVDSKSQEKLLAPSAPTLTLAKFNQVTVGMTRAQVLATVGQGSCTTWSEYYPAYPSTAGVTLSLSCFDVDGYSSTGFYRGSAHLWFTDGVLQGKRQWDLV</sequence>
<accession>P35804</accession>
<comment type="function">
    <text evidence="8 10 11 12">Inhibits a wide variety of beta lactamases.</text>
</comment>
<comment type="subunit">
    <text evidence="4 5 8 11 12">Interacts with E.coli beta-lactamase TEM-1; interaction inhibits hydrolysis of beta-lactam antibiotics (PubMed:17070843, PubMed:18775544, PubMed:8145854). Interacts with K.pneumoniae beta-lactamase SHV-1 (PubMed:18775544). Interacts with K.pneumoniae beta-lactamases KPC-2 and KPC-3; interaction inhibits hydrolysis of beta-lactam antibiotics (PubMed:19731932). Interacts with E.coli beta-lactamases CTX-M-14 and CTX-M-15; interaction inhibits hydrolysis of beta-lactam antibiotics (PubMed:36344533).</text>
</comment>
<comment type="interaction">
    <interactant intactId="EBI-1031985">
        <id>P35804</id>
    </interactant>
    <interactant intactId="EBI-1031989">
        <id>P62593</id>
        <label>blaT-6</label>
    </interactant>
    <organismsDiffer>true</organismsDiffer>
    <experiments>2</experiments>
</comment>
<comment type="subcellular location">
    <subcellularLocation>
        <location evidence="10">Secreted</location>
    </subcellularLocation>
</comment>
<evidence type="ECO:0000255" key="1"/>
<evidence type="ECO:0000269" key="2">
    <source>
    </source>
</evidence>
<evidence type="ECO:0000269" key="3">
    <source>
    </source>
</evidence>
<evidence type="ECO:0000269" key="4">
    <source>
    </source>
</evidence>
<evidence type="ECO:0000269" key="5">
    <source>
    </source>
</evidence>
<evidence type="ECO:0000269" key="6">
    <source>
    </source>
</evidence>
<evidence type="ECO:0000269" key="7">
    <source>
    </source>
</evidence>
<evidence type="ECO:0000269" key="8">
    <source>
    </source>
</evidence>
<evidence type="ECO:0000269" key="9">
    <source>
    </source>
</evidence>
<evidence type="ECO:0000269" key="10">
    <source>
    </source>
</evidence>
<evidence type="ECO:0000269" key="11">
    <source>
    </source>
</evidence>
<evidence type="ECO:0000269" key="12">
    <source>
    </source>
</evidence>
<evidence type="ECO:0007744" key="13">
    <source>
        <dbReference type="PDB" id="1JTG"/>
    </source>
</evidence>
<evidence type="ECO:0007744" key="14">
    <source>
        <dbReference type="PDB" id="2B5R"/>
    </source>
</evidence>
<evidence type="ECO:0007744" key="15">
    <source>
        <dbReference type="PDB" id="2G2U"/>
    </source>
</evidence>
<evidence type="ECO:0007744" key="16">
    <source>
        <dbReference type="PDB" id="2G2W"/>
    </source>
</evidence>
<evidence type="ECO:0007744" key="17">
    <source>
        <dbReference type="PDB" id="3C4O"/>
    </source>
</evidence>
<evidence type="ECO:0007744" key="18">
    <source>
        <dbReference type="PDB" id="3C4P"/>
    </source>
</evidence>
<evidence type="ECO:0007744" key="19">
    <source>
        <dbReference type="PDB" id="3C7U"/>
    </source>
</evidence>
<evidence type="ECO:0007744" key="20">
    <source>
        <dbReference type="PDB" id="3C7V"/>
    </source>
</evidence>
<evidence type="ECO:0007744" key="21">
    <source>
        <dbReference type="PDB" id="3E2K"/>
    </source>
</evidence>
<evidence type="ECO:0007744" key="22">
    <source>
        <dbReference type="PDB" id="3E2L"/>
    </source>
</evidence>
<evidence type="ECO:0007744" key="23">
    <source>
        <dbReference type="PDB" id="3GMU"/>
    </source>
</evidence>
<evidence type="ECO:0007744" key="24">
    <source>
        <dbReference type="PDB" id="3N4I"/>
    </source>
</evidence>
<evidence type="ECO:0007744" key="25">
    <source>
        <dbReference type="PDB" id="7S5S"/>
    </source>
</evidence>
<evidence type="ECO:0007829" key="26">
    <source>
        <dbReference type="PDB" id="3C7U"/>
    </source>
</evidence>
<evidence type="ECO:0007829" key="27">
    <source>
        <dbReference type="PDB" id="7S5S"/>
    </source>
</evidence>
<reference key="1">
    <citation type="journal article" date="1990" name="J. Bacteriol.">
        <title>Isolation and characterization of a beta-lactamase-inhibitory protein from Streptomyces clavuligerus and cloning and analysis of the corresponding gene.</title>
        <authorList>
            <person name="Doran J.L."/>
            <person name="Leskiw B.K."/>
            <person name="Aippersbach S."/>
            <person name="Jensen S.E."/>
        </authorList>
    </citation>
    <scope>NUCLEOTIDE SEQUENCE [GENOMIC DNA]</scope>
    <scope>PARTIAL PROTEIN SEQUENCE</scope>
    <scope>FUNCTION</scope>
</reference>
<reference key="2">
    <citation type="journal article" date="1994" name="Nature">
        <title>Structural and kinetic characterization of a beta-lactamase-inhibitor protein.</title>
        <authorList>
            <person name="Strynadka N.C.J."/>
            <person name="Jensen S.E."/>
            <person name="Johns K."/>
            <person name="Blanchard H."/>
            <person name="Page M."/>
            <person name="Matagne A."/>
            <person name="Frere J.-M."/>
            <person name="James M.N.G."/>
        </authorList>
    </citation>
    <scope>X-RAY CRYSTALLOGRAPHY (2.1 ANGSTROMS)</scope>
    <scope>FUNCTION</scope>
    <scope>INTERACTION WITH E.COLI BETA-LACTAMASE TEM-1</scope>
    <scope>DISULFIDE BONDS</scope>
</reference>
<reference key="3">
    <citation type="journal article" date="1996" name="Nat. Struct. Biol.">
        <title>A potent new mode of beta-lactamase inhibition revealed by the 1.7 A X-ray crystallographic structure of the TEM-1-BLIP complex.</title>
        <authorList>
            <person name="Strynadka N.C.J."/>
            <person name="Jensen S.E."/>
            <person name="Alzari P.M."/>
            <person name="James M.N.G."/>
        </authorList>
    </citation>
    <scope>X-RAY CRYSTALLOGRAPHY (1.7 ANGSTROMS) IN COMPLEX WITH E.COLI BETA-LACTAMASE TEM-1</scope>
</reference>
<reference evidence="13" key="4">
    <citation type="journal article" date="2001" name="Nat. Struct. Biol.">
        <title>Crystal structure and kinetic analysis of beta-lactamase inhibitor protein-II in complex with TEM-1 beta-lactamase.</title>
        <authorList>
            <person name="Lim D."/>
            <person name="Park H.U."/>
            <person name="De Castro L."/>
            <person name="Kang S.G."/>
            <person name="Lee H.S."/>
            <person name="Jensen S."/>
            <person name="Lee K.J."/>
            <person name="Strynadka N.C."/>
        </authorList>
    </citation>
    <scope>X-RAY CRYSTALLOGRAPHY (1.73 ANGSTROMS) OF 37-201 IN COMPLEX WITH E.COLI BETA-LACTAMASE TEM-1</scope>
    <scope>DISULFIDE BONDS</scope>
</reference>
<reference evidence="15 16" key="5">
    <citation type="journal article" date="2006" name="J. Biol. Chem.">
        <title>Structural and computational characterization of the SHV-1 beta-lactamase-beta-lactamase inhibitor protein interface.</title>
        <authorList>
            <person name="Reynolds K.A."/>
            <person name="Thomson J.M."/>
            <person name="Corbett K.D."/>
            <person name="Bethel C.R."/>
            <person name="Berger J.M."/>
            <person name="Kirsch J.F."/>
            <person name="Bonomo R.A."/>
            <person name="Handel T.M."/>
        </authorList>
    </citation>
    <scope>X-RAY CRYSTALLOGRAPHY (1.60 ANGSTROMS) OF 37-201 IN COMPLEX WITH K.PNEUMONIAE BETA-LACTAMASE SHV-1</scope>
    <scope>DISULFIDE BONDS</scope>
</reference>
<reference evidence="14" key="6">
    <citation type="journal article" date="2007" name="J. Mol. Biol.">
        <title>Binding hot spots in the TEM1-BLIP interface in light of its modular architecture.</title>
        <authorList>
            <person name="Reichmann D."/>
            <person name="Cohen M."/>
            <person name="Abramovich R."/>
            <person name="Dym O."/>
            <person name="Lim D."/>
            <person name="Strynadka N.C."/>
            <person name="Schreiber G."/>
        </authorList>
    </citation>
    <scope>X-RAY CRYSTALLOGRAPHY (1.65 ANGSTROMS) OF 37-201 IN COMPLEX WITH E.COLI BETA-LACTAMASE TEM-1</scope>
    <scope>INTERACTION WITH E.COLI BETA-LACTAMASE TEM-1</scope>
    <scope>DISULFIDE BOND</scope>
</reference>
<reference evidence="17 18" key="7">
    <citation type="journal article" date="2008" name="J. Mol. Biol.">
        <title>Computational redesign of the SHV-1 beta-lactamase/beta-lactamase inhibitor protein interface.</title>
        <authorList>
            <person name="Reynolds K.A."/>
            <person name="Hanes M.S."/>
            <person name="Thomson J.M."/>
            <person name="Antczak A.J."/>
            <person name="Berger J.M."/>
            <person name="Bonomo R.A."/>
            <person name="Kirsch J.F."/>
            <person name="Handel T.M."/>
        </authorList>
    </citation>
    <scope>X-RAY CRYSTALLOGRAPHY (1.70 ANGSTROMS) OF 37-201 OF MUTANTS MET-109 AND MET-109/LYS-166/MET-182 IN COMPLEXES WITH K.PNEUMONIAE BETA-LACTAMASE SHV-1</scope>
    <scope>INTERACTION WITH K.PNEUMONIAE BETA-LACTAMASE SHV-1</scope>
    <scope>INTERACTION WITH E.COLI BETA-LACTAMASE TEM-1</scope>
    <scope>MUTAGENESIS OF GLU-109 AND SER-166</scope>
    <scope>DISULFIDE BONDS</scope>
</reference>
<reference evidence="21 22" key="8">
    <citation type="journal article" date="2009" name="Biochemistry">
        <title>Structural and biochemical characterization of the interaction between KPC-2 beta-lactamase and beta-lactamase inhibitor protein.</title>
        <authorList>
            <person name="Hanes M.S."/>
            <person name="Jude K.M."/>
            <person name="Berger J.M."/>
            <person name="Bonomo R.A."/>
            <person name="Handel T.M."/>
        </authorList>
    </citation>
    <scope>X-RAY CRYSTALLOGRAPHY (1.87 ANGSTROMS) OF 37-201 IN COMPLEX WITH MUTANT K.PNEUMONIAE BETA-LACTAMASE KPC-2</scope>
    <scope>FUNCTION</scope>
    <scope>INTERACTION WITH K.PNEUMONIAE BETA-LACTAMASES KPC-2 AND KPC-3</scope>
    <scope>DISULFIDE BONDS</scope>
</reference>
<reference evidence="23" key="9">
    <citation type="journal article" date="2009" name="J. Mol. Biol.">
        <title>Insights into positive and negative requirements for protein-protein interactions by crystallographic analysis of the beta-lactamase inhibitory proteins BLIP, BLIP-I, and BLP.</title>
        <authorList>
            <person name="Gretes M."/>
            <person name="Lim D.C."/>
            <person name="de Castro L."/>
            <person name="Jensen S.E."/>
            <person name="Kang S.G."/>
            <person name="Lee K.J."/>
            <person name="Strynadka N.C."/>
        </authorList>
    </citation>
    <scope>X-RAY CRYSTALLOGRAPHY (1.98 ANGSTROMS) OF 37-201</scope>
    <scope>DISULFIDE BONDS</scope>
</reference>
<reference evidence="19 20" key="10">
    <citation type="journal article" date="2009" name="J. Biol. Chem.">
        <title>Structural insight into the kinetics and DeltaCp of interactions between TEM-1 beta-lactamase and beta-lactamase inhibitory protein (BLIP).</title>
        <authorList>
            <person name="Wang J."/>
            <person name="Palzkill T."/>
            <person name="Chow D.C."/>
        </authorList>
    </citation>
    <scope>X-RAY CRYSTALLOGRAPHY (2.07 ANGSTROMS) OF 37-201 OF MUTANTS ALA-87 AND ALA-186 IN COMPLEXES WITH E.COLI BETA-LACTAMASE TEM-1</scope>
    <scope>MUTAGENESIS OF TYR-87 AND TRP-186</scope>
    <scope>DISULFIDE BONDS</scope>
</reference>
<reference evidence="24" key="11">
    <citation type="journal article" date="2011" name="Proteins">
        <title>Specificity and cooperativity at beta-lactamase position 104 in TEM-1/BLIP and SHV-1/BLIP interactions.</title>
        <authorList>
            <person name="Hanes M.S."/>
            <person name="Reynolds K.A."/>
            <person name="McNamara C."/>
            <person name="Ghosh P."/>
            <person name="Bonomo R.A."/>
            <person name="Kirsch J.F."/>
            <person name="Handel T.M."/>
        </authorList>
    </citation>
    <scope>X-RAY CRYSTALLOGRAPHY (1.56 ANGSTROMS) OF 37-201 IN COMPLEX WITH MUTANT K.PNEUMONIAE BETA-LACTAMASE SHV-1</scope>
    <scope>MUTAGENESIS OF GLU-109; LYS-110 AND PHE-178</scope>
    <scope>DISULFIDE BONDS</scope>
</reference>
<reference evidence="25" key="12">
    <citation type="journal article" date="2022" name="Nat. Commun.">
        <title>An active site loop toggles between conformations to control antibiotic hydrolysis and inhibition potency for CTX-M beta-lactamase drug-resistance enzymes.</title>
        <authorList>
            <person name="Lu S."/>
            <person name="Hu L."/>
            <person name="Lin H."/>
            <person name="Judge A."/>
            <person name="Rivera P."/>
            <person name="Palaniappan M."/>
            <person name="Sankaran B."/>
            <person name="Wang J."/>
            <person name="Prasad B.V.V."/>
            <person name="Palzkill T."/>
        </authorList>
    </citation>
    <scope>X-RAY CRYSTALLOGRAPHY (1.40 ANGSTROMS) OF 37-201 IN COMPLEX WITH E.COLI BETA-LACTAMASE CTX-M-15</scope>
    <scope>FUNCTION</scope>
    <scope>INTERACTION WITH E.COLI BETA-LACTAMASES CTX-M-14 AND CTX-M-15</scope>
    <scope>DISULFIDE BONDS</scope>
</reference>
<feature type="signal peptide" evidence="10">
    <location>
        <begin position="1"/>
        <end position="36"/>
    </location>
</feature>
<feature type="chain" id="PRO_0000020817" description="Beta-lactamase inhibitory protein" evidence="1">
    <location>
        <begin position="37"/>
        <end position="201"/>
    </location>
</feature>
<feature type="repeat" description="1" evidence="12">
    <location>
        <begin position="37"/>
        <end position="112"/>
    </location>
</feature>
<feature type="repeat" description="2" evidence="12">
    <location>
        <begin position="116"/>
        <end position="201"/>
    </location>
</feature>
<feature type="disulfide bond" evidence="2 3 5 6 7 8 9 11 12 13 15 17 19 20 21 22 23 24 25">
    <location>
        <begin position="66"/>
        <end position="78"/>
    </location>
</feature>
<feature type="disulfide bond" evidence="2 3 4 5 6 7 8 9 11 12 13 14 15 17 19 20 21 22 23 24 25">
    <location>
        <begin position="145"/>
        <end position="167"/>
    </location>
</feature>
<feature type="mutagenesis site" description="Decreases binding affinity for E.coli beta-lactamase TEM-1." evidence="6">
    <original>Y</original>
    <variation>A</variation>
    <location>
        <position position="87"/>
    </location>
</feature>
<feature type="mutagenesis site" description="Increases binding affinity for K.pneumoniae beta-lactamase SHV-1 and E.coli beta-lactamase TEM-1. Decreases binding affinity for K.pneumoniae beta-lactamase SHV-1 and E.coli beta-lactamase TEM-1; when associated with A-110 and A-178." evidence="5 9">
    <original>E</original>
    <variation>M</variation>
    <location>
        <position position="109"/>
    </location>
</feature>
<feature type="mutagenesis site" description="Decreases binding affinity for K.pneumoniae beta-lactamase SHV-1 and E.coli beta-lactamase TEM-1; when associated with M-109 and A-178." evidence="9">
    <original>K</original>
    <variation>A</variation>
    <location>
        <position position="110"/>
    </location>
</feature>
<feature type="mutagenesis site" description="Increases binding affinity for K.pneumoniae beta-lactamase SHV-1. Decreases binding affinity for E.coli beta-lactamase TEM-1." evidence="5">
    <original>S</original>
    <variation>K</variation>
    <location>
        <position position="166"/>
    </location>
</feature>
<feature type="mutagenesis site" description="Decreases binding affinity for K.pneumoniae beta-lactamase SHV-1 and E.coli beta-lactamase TEM-1; when associated with M-109 and A-110." evidence="9">
    <original>F</original>
    <variation>A</variation>
    <location>
        <position position="178"/>
    </location>
</feature>
<feature type="mutagenesis site" description="Decreases binding affinity for E.coli beta-lactamase TEM-1." evidence="6">
    <original>W</original>
    <variation>A</variation>
    <location>
        <position position="186"/>
    </location>
</feature>
<feature type="helix" evidence="27">
    <location>
        <begin position="42"/>
        <end position="47"/>
    </location>
</feature>
<feature type="helix" evidence="27">
    <location>
        <begin position="54"/>
        <end position="61"/>
    </location>
</feature>
<feature type="helix" evidence="27">
    <location>
        <begin position="63"/>
        <end position="65"/>
    </location>
</feature>
<feature type="strand" evidence="26">
    <location>
        <begin position="66"/>
        <end position="69"/>
    </location>
</feature>
<feature type="helix" evidence="27">
    <location>
        <begin position="70"/>
        <end position="72"/>
    </location>
</feature>
<feature type="strand" evidence="27">
    <location>
        <begin position="75"/>
        <end position="83"/>
    </location>
</feature>
<feature type="strand" evidence="27">
    <location>
        <begin position="86"/>
        <end position="98"/>
    </location>
</feature>
<feature type="strand" evidence="27">
    <location>
        <begin position="102"/>
        <end position="111"/>
    </location>
</feature>
<feature type="helix" evidence="27">
    <location>
        <begin position="121"/>
        <end position="126"/>
    </location>
</feature>
<feature type="helix" evidence="27">
    <location>
        <begin position="133"/>
        <end position="140"/>
    </location>
</feature>
<feature type="strand" evidence="27">
    <location>
        <begin position="143"/>
        <end position="151"/>
    </location>
</feature>
<feature type="turn" evidence="27">
    <location>
        <begin position="153"/>
        <end position="156"/>
    </location>
</feature>
<feature type="strand" evidence="27">
    <location>
        <begin position="162"/>
        <end position="169"/>
    </location>
</feature>
<feature type="turn" evidence="27">
    <location>
        <begin position="170"/>
        <end position="172"/>
    </location>
</feature>
<feature type="strand" evidence="27">
    <location>
        <begin position="175"/>
        <end position="177"/>
    </location>
</feature>
<feature type="strand" evidence="27">
    <location>
        <begin position="180"/>
        <end position="188"/>
    </location>
</feature>
<feature type="strand" evidence="27">
    <location>
        <begin position="191"/>
        <end position="199"/>
    </location>
</feature>
<dbReference type="EMBL" id="M34538">
    <property type="protein sequence ID" value="AAA16182.1"/>
    <property type="molecule type" value="Genomic_DNA"/>
</dbReference>
<dbReference type="PIR" id="A36710">
    <property type="entry name" value="A36710"/>
</dbReference>
<dbReference type="RefSeq" id="WP_044955856.1">
    <property type="nucleotide sequence ID" value="NZ_CM000913.1"/>
</dbReference>
<dbReference type="PDB" id="1JTG">
    <property type="method" value="X-ray"/>
    <property type="resolution" value="1.73 A"/>
    <property type="chains" value="B/D=37-201"/>
</dbReference>
<dbReference type="PDB" id="1S0W">
    <property type="method" value="X-ray"/>
    <property type="resolution" value="2.30 A"/>
    <property type="chains" value="C/D=37-201"/>
</dbReference>
<dbReference type="PDB" id="1XXM">
    <property type="method" value="X-ray"/>
    <property type="resolution" value="1.90 A"/>
    <property type="chains" value="C/D=37-201"/>
</dbReference>
<dbReference type="PDB" id="2B5R">
    <property type="method" value="X-ray"/>
    <property type="resolution" value="1.65 A"/>
    <property type="chains" value="C/D=37-201"/>
</dbReference>
<dbReference type="PDB" id="2G2U">
    <property type="method" value="X-ray"/>
    <property type="resolution" value="1.60 A"/>
    <property type="chains" value="B=37-201"/>
</dbReference>
<dbReference type="PDB" id="2G2W">
    <property type="method" value="X-ray"/>
    <property type="resolution" value="1.80 A"/>
    <property type="chains" value="B=37-201"/>
</dbReference>
<dbReference type="PDB" id="3C4O">
    <property type="method" value="X-ray"/>
    <property type="resolution" value="1.70 A"/>
    <property type="chains" value="B=37-201"/>
</dbReference>
<dbReference type="PDB" id="3C4P">
    <property type="method" value="X-ray"/>
    <property type="resolution" value="1.75 A"/>
    <property type="chains" value="B=37-201"/>
</dbReference>
<dbReference type="PDB" id="3C7U">
    <property type="method" value="X-ray"/>
    <property type="resolution" value="2.20 A"/>
    <property type="chains" value="B/D=37-201"/>
</dbReference>
<dbReference type="PDB" id="3C7V">
    <property type="method" value="X-ray"/>
    <property type="resolution" value="2.07 A"/>
    <property type="chains" value="B/D=37-201"/>
</dbReference>
<dbReference type="PDB" id="3E2K">
    <property type="method" value="X-ray"/>
    <property type="resolution" value="2.10 A"/>
    <property type="chains" value="C/D=37-201"/>
</dbReference>
<dbReference type="PDB" id="3E2L">
    <property type="method" value="X-ray"/>
    <property type="resolution" value="1.87 A"/>
    <property type="chains" value="C/D=37-201"/>
</dbReference>
<dbReference type="PDB" id="3GMU">
    <property type="method" value="X-ray"/>
    <property type="resolution" value="1.98 A"/>
    <property type="chains" value="B=37-201"/>
</dbReference>
<dbReference type="PDB" id="3N4I">
    <property type="method" value="X-ray"/>
    <property type="resolution" value="1.56 A"/>
    <property type="chains" value="B=37-201"/>
</dbReference>
<dbReference type="PDB" id="7S5S">
    <property type="method" value="X-ray"/>
    <property type="resolution" value="1.40 A"/>
    <property type="chains" value="B=37-201"/>
</dbReference>
<dbReference type="PDBsum" id="1JTG"/>
<dbReference type="PDBsum" id="1S0W"/>
<dbReference type="PDBsum" id="1XXM"/>
<dbReference type="PDBsum" id="2B5R"/>
<dbReference type="PDBsum" id="2G2U"/>
<dbReference type="PDBsum" id="2G2W"/>
<dbReference type="PDBsum" id="3C4O"/>
<dbReference type="PDBsum" id="3C4P"/>
<dbReference type="PDBsum" id="3C7U"/>
<dbReference type="PDBsum" id="3C7V"/>
<dbReference type="PDBsum" id="3E2K"/>
<dbReference type="PDBsum" id="3E2L"/>
<dbReference type="PDBsum" id="3GMU"/>
<dbReference type="PDBsum" id="3N4I"/>
<dbReference type="PDBsum" id="7S5S"/>
<dbReference type="SMR" id="P35804"/>
<dbReference type="IntAct" id="P35804">
    <property type="interactions" value="1"/>
</dbReference>
<dbReference type="STRING" id="1901.BB341_06630"/>
<dbReference type="GeneID" id="93729091"/>
<dbReference type="KEGG" id="sclf:BB341_06630"/>
<dbReference type="EvolutionaryTrace" id="P35804"/>
<dbReference type="GO" id="GO:0005576">
    <property type="term" value="C:extracellular region"/>
    <property type="evidence" value="ECO:0007669"/>
    <property type="project" value="UniProtKB-SubCell"/>
</dbReference>
<dbReference type="GO" id="GO:0033252">
    <property type="term" value="P:regulation of beta-lactamase activity"/>
    <property type="evidence" value="ECO:0000315"/>
    <property type="project" value="CACAO"/>
</dbReference>
<dbReference type="Gene3D" id="3.30.1450.10">
    <property type="match status" value="2"/>
</dbReference>
<dbReference type="InterPro" id="IPR037873">
    <property type="entry name" value="BamE-like"/>
</dbReference>
<dbReference type="InterPro" id="IPR009099">
    <property type="entry name" value="Beta-lactamas_inhib"/>
</dbReference>
<dbReference type="InterPro" id="IPR024221">
    <property type="entry name" value="BLIP_dom_sf"/>
</dbReference>
<dbReference type="Pfam" id="PF07467">
    <property type="entry name" value="BLIP"/>
    <property type="match status" value="1"/>
</dbReference>
<dbReference type="PIRSF" id="PIRSF009292">
    <property type="entry name" value="B_lactamas_inhib"/>
    <property type="match status" value="1"/>
</dbReference>
<dbReference type="SUPFAM" id="SSF55648">
    <property type="entry name" value="beta-lactamase-inhibitor protein, BLIP"/>
    <property type="match status" value="1"/>
</dbReference>